<name>GGLO4_ARATH</name>
<gene>
    <name evidence="4" type="primary">GULLO4</name>
    <name evidence="7" type="ordered locus">At5g56490</name>
    <name evidence="8" type="ORF">MCD7.26</name>
</gene>
<sequence>MSFWLSLIFCFFTFASSSPPDDPVNCEFGNTMCTVTNSYGAFPDRSICKAAKVEYPRTEAELVSIVAAATRAGQKMRVVTRYSHSFPKLVCTDGKDGTLISTKFLNHVVTTNPEAKTLTVESGVTLRQLIEEAAKFDLALPYAPYWWGLTVGGMMGTGAHGSSLWGKGSAVHDYVTEIRLVSPGLASDGYVKVQVLSETIDPEEFRAAKVSLGVLGVISQVTFELQPMFKRSLNYVMRNDSDFGDQAVSFGERHEFADFLWLPSQGKVVYRMDGRVPLNTSGDGLFEFFPFRSQLSLVLAIDRSLEESEESLEDANMKCVRAKLVSSSMFLMSYGVTNNGLIFTGYPVIGMQNHMMSSGSCLDSRQDGLITACPWDPRIKGQFFHQTTFSVSLTNVKSFINDIKALVKIEPKSLCVLEGSNGILIRYVTSSLAFLGKEEKALDFDLTYYRSKNDPLAPRLYEDYIEEIEQMAIFKYNALPHWGKNRNLAFDGAIRKYKNANAFLKVKEKFDSLGLFSTEWTDQILGLKGNVTIVKQGCALEGLCICSEDSHCAPTKGYLCRPGKVYREARVCTRVSS</sequence>
<proteinExistence type="evidence at transcript level"/>
<organism evidence="9">
    <name type="scientific">Arabidopsis thaliana</name>
    <name type="common">Mouse-ear cress</name>
    <dbReference type="NCBI Taxonomy" id="3702"/>
    <lineage>
        <taxon>Eukaryota</taxon>
        <taxon>Viridiplantae</taxon>
        <taxon>Streptophyta</taxon>
        <taxon>Embryophyta</taxon>
        <taxon>Tracheophyta</taxon>
        <taxon>Spermatophyta</taxon>
        <taxon>Magnoliopsida</taxon>
        <taxon>eudicotyledons</taxon>
        <taxon>Gunneridae</taxon>
        <taxon>Pentapetalae</taxon>
        <taxon>rosids</taxon>
        <taxon>malvids</taxon>
        <taxon>Brassicales</taxon>
        <taxon>Brassicaceae</taxon>
        <taxon>Camelineae</taxon>
        <taxon>Arabidopsis</taxon>
    </lineage>
</organism>
<dbReference type="EC" id="1.1.3.8" evidence="5"/>
<dbReference type="EMBL" id="AB009049">
    <property type="protein sequence ID" value="BAB11277.1"/>
    <property type="molecule type" value="Genomic_DNA"/>
</dbReference>
<dbReference type="EMBL" id="CP002688">
    <property type="protein sequence ID" value="AED96772.1"/>
    <property type="molecule type" value="Genomic_DNA"/>
</dbReference>
<dbReference type="EMBL" id="BT004109">
    <property type="protein sequence ID" value="AAO42132.1"/>
    <property type="molecule type" value="mRNA"/>
</dbReference>
<dbReference type="RefSeq" id="NP_200460.1">
    <property type="nucleotide sequence ID" value="NM_125032.4"/>
</dbReference>
<dbReference type="SMR" id="Q9FM82"/>
<dbReference type="FunCoup" id="Q9FM82">
    <property type="interactions" value="267"/>
</dbReference>
<dbReference type="STRING" id="3702.Q9FM82"/>
<dbReference type="PaxDb" id="3702-AT5G56490.1"/>
<dbReference type="ProteomicsDB" id="224780"/>
<dbReference type="EnsemblPlants" id="AT5G56490.1">
    <property type="protein sequence ID" value="AT5G56490.1"/>
    <property type="gene ID" value="AT5G56490"/>
</dbReference>
<dbReference type="GeneID" id="835750"/>
<dbReference type="Gramene" id="AT5G56490.1">
    <property type="protein sequence ID" value="AT5G56490.1"/>
    <property type="gene ID" value="AT5G56490"/>
</dbReference>
<dbReference type="KEGG" id="ath:AT5G56490"/>
<dbReference type="Araport" id="AT5G56490"/>
<dbReference type="TAIR" id="AT5G56490">
    <property type="gene designation" value="GULLO4"/>
</dbReference>
<dbReference type="eggNOG" id="KOG4730">
    <property type="taxonomic scope" value="Eukaryota"/>
</dbReference>
<dbReference type="HOGENOM" id="CLU_019762_2_0_1"/>
<dbReference type="InParanoid" id="Q9FM82"/>
<dbReference type="OMA" id="VSWLPRQ"/>
<dbReference type="PhylomeDB" id="Q9FM82"/>
<dbReference type="UniPathway" id="UPA00132"/>
<dbReference type="PRO" id="PR:Q9FM82"/>
<dbReference type="Proteomes" id="UP000006548">
    <property type="component" value="Chromosome 5"/>
</dbReference>
<dbReference type="ExpressionAtlas" id="Q9FM82">
    <property type="expression patterns" value="baseline and differential"/>
</dbReference>
<dbReference type="GO" id="GO:0016020">
    <property type="term" value="C:membrane"/>
    <property type="evidence" value="ECO:0007669"/>
    <property type="project" value="InterPro"/>
</dbReference>
<dbReference type="GO" id="GO:0003885">
    <property type="term" value="F:D-arabinono-1,4-lactone oxidase activity"/>
    <property type="evidence" value="ECO:0007669"/>
    <property type="project" value="InterPro"/>
</dbReference>
<dbReference type="GO" id="GO:0071949">
    <property type="term" value="F:FAD binding"/>
    <property type="evidence" value="ECO:0007669"/>
    <property type="project" value="InterPro"/>
</dbReference>
<dbReference type="GO" id="GO:0050105">
    <property type="term" value="F:L-gulonolactone oxidase activity"/>
    <property type="evidence" value="ECO:0007669"/>
    <property type="project" value="UniProtKB-EC"/>
</dbReference>
<dbReference type="GO" id="GO:0019853">
    <property type="term" value="P:L-ascorbic acid biosynthetic process"/>
    <property type="evidence" value="ECO:0007669"/>
    <property type="project" value="UniProtKB-UniPathway"/>
</dbReference>
<dbReference type="FunFam" id="3.30.465.10:FF:000033">
    <property type="entry name" value="L-gulonolactone oxidase 5"/>
    <property type="match status" value="1"/>
</dbReference>
<dbReference type="Gene3D" id="3.30.465.10">
    <property type="match status" value="1"/>
</dbReference>
<dbReference type="Gene3D" id="3.30.43.10">
    <property type="entry name" value="Uridine Diphospho-n-acetylenolpyruvylglucosamine Reductase, domain 2"/>
    <property type="match status" value="1"/>
</dbReference>
<dbReference type="InterPro" id="IPR007173">
    <property type="entry name" value="ALO_C"/>
</dbReference>
<dbReference type="InterPro" id="IPR016166">
    <property type="entry name" value="FAD-bd_PCMH"/>
</dbReference>
<dbReference type="InterPro" id="IPR036318">
    <property type="entry name" value="FAD-bd_PCMH-like_sf"/>
</dbReference>
<dbReference type="InterPro" id="IPR016167">
    <property type="entry name" value="FAD-bd_PCMH_sub1"/>
</dbReference>
<dbReference type="InterPro" id="IPR016169">
    <property type="entry name" value="FAD-bd_PCMH_sub2"/>
</dbReference>
<dbReference type="InterPro" id="IPR050432">
    <property type="entry name" value="FAD-linked_Oxidoreductases_BP"/>
</dbReference>
<dbReference type="InterPro" id="IPR055154">
    <property type="entry name" value="GULLO2-like_C"/>
</dbReference>
<dbReference type="InterPro" id="IPR010030">
    <property type="entry name" value="GULO_Plant"/>
</dbReference>
<dbReference type="InterPro" id="IPR006094">
    <property type="entry name" value="Oxid_FAD_bind_N"/>
</dbReference>
<dbReference type="NCBIfam" id="TIGR01677">
    <property type="entry name" value="pln_FAD_oxido"/>
    <property type="match status" value="1"/>
</dbReference>
<dbReference type="PANTHER" id="PTHR13878">
    <property type="entry name" value="GULONOLACTONE OXIDASE"/>
    <property type="match status" value="1"/>
</dbReference>
<dbReference type="PANTHER" id="PTHR13878:SF169">
    <property type="entry name" value="L-GULONOLACTONE OXIDASE 1-RELATED"/>
    <property type="match status" value="1"/>
</dbReference>
<dbReference type="Pfam" id="PF04030">
    <property type="entry name" value="ALO"/>
    <property type="match status" value="1"/>
</dbReference>
<dbReference type="Pfam" id="PF01565">
    <property type="entry name" value="FAD_binding_4"/>
    <property type="match status" value="1"/>
</dbReference>
<dbReference type="Pfam" id="PF22906">
    <property type="entry name" value="GULLO2-like_3rd"/>
    <property type="match status" value="1"/>
</dbReference>
<dbReference type="SUPFAM" id="SSF56176">
    <property type="entry name" value="FAD-binding/transporter-associated domain-like"/>
    <property type="match status" value="1"/>
</dbReference>
<dbReference type="PROSITE" id="PS51387">
    <property type="entry name" value="FAD_PCMH"/>
    <property type="match status" value="1"/>
</dbReference>
<accession>Q9FM82</accession>
<accession>Q84W90</accession>
<keyword id="KW-0060">Ascorbate biosynthesis</keyword>
<keyword id="KW-0274">FAD</keyword>
<keyword id="KW-0285">Flavoprotein</keyword>
<keyword id="KW-0560">Oxidoreductase</keyword>
<keyword id="KW-1185">Reference proteome</keyword>
<keyword id="KW-0732">Signal</keyword>
<feature type="signal peptide" evidence="2">
    <location>
        <begin position="1"/>
        <end position="17"/>
    </location>
</feature>
<feature type="chain" id="PRO_0000432505" description="Probable L-gulonolactone oxidase 4" evidence="2">
    <location>
        <begin position="18"/>
        <end position="577"/>
    </location>
</feature>
<feature type="domain" description="FAD-binding PCMH-type" evidence="3">
    <location>
        <begin position="46"/>
        <end position="228"/>
    </location>
</feature>
<feature type="sequence conflict" description="In Ref. 3; AAO42132." evidence="5" ref="3">
    <original>A</original>
    <variation>V</variation>
    <location>
        <position position="186"/>
    </location>
</feature>
<comment type="function">
    <text evidence="6">May be involved in the biosynthesis of ascorbic acid.</text>
</comment>
<comment type="catalytic activity">
    <reaction evidence="5">
        <text>L-gulono-1,4-lactone + O2 = L-ascorbate + H2O2 + H(+)</text>
        <dbReference type="Rhea" id="RHEA:32363"/>
        <dbReference type="ChEBI" id="CHEBI:15378"/>
        <dbReference type="ChEBI" id="CHEBI:15379"/>
        <dbReference type="ChEBI" id="CHEBI:16240"/>
        <dbReference type="ChEBI" id="CHEBI:17587"/>
        <dbReference type="ChEBI" id="CHEBI:38290"/>
        <dbReference type="EC" id="1.1.3.8"/>
    </reaction>
</comment>
<comment type="cofactor">
    <cofactor evidence="1">
        <name>FAD</name>
        <dbReference type="ChEBI" id="CHEBI:57692"/>
    </cofactor>
</comment>
<comment type="pathway">
    <text evidence="6">Cofactor biosynthesis; L-ascorbate biosynthesis.</text>
</comment>
<comment type="similarity">
    <text evidence="5">Belongs to the oxygen-dependent FAD-linked oxidoreductase family.</text>
</comment>
<reference key="1">
    <citation type="journal article" date="1998" name="DNA Res.">
        <title>Structural analysis of Arabidopsis thaliana chromosome 5. IV. Sequence features of the regions of 1,456,315 bp covered by nineteen physically assigned P1 and TAC clones.</title>
        <authorList>
            <person name="Sato S."/>
            <person name="Kaneko T."/>
            <person name="Kotani H."/>
            <person name="Nakamura Y."/>
            <person name="Asamizu E."/>
            <person name="Miyajima N."/>
            <person name="Tabata S."/>
        </authorList>
    </citation>
    <scope>NUCLEOTIDE SEQUENCE [LARGE SCALE GENOMIC DNA]</scope>
    <source>
        <strain>cv. Columbia</strain>
    </source>
</reference>
<reference key="2">
    <citation type="journal article" date="2017" name="Plant J.">
        <title>Araport11: a complete reannotation of the Arabidopsis thaliana reference genome.</title>
        <authorList>
            <person name="Cheng C.Y."/>
            <person name="Krishnakumar V."/>
            <person name="Chan A.P."/>
            <person name="Thibaud-Nissen F."/>
            <person name="Schobel S."/>
            <person name="Town C.D."/>
        </authorList>
    </citation>
    <scope>GENOME REANNOTATION</scope>
    <source>
        <strain>cv. Columbia</strain>
    </source>
</reference>
<reference key="3">
    <citation type="journal article" date="2003" name="Science">
        <title>Empirical analysis of transcriptional activity in the Arabidopsis genome.</title>
        <authorList>
            <person name="Yamada K."/>
            <person name="Lim J."/>
            <person name="Dale J.M."/>
            <person name="Chen H."/>
            <person name="Shinn P."/>
            <person name="Palm C.J."/>
            <person name="Southwick A.M."/>
            <person name="Wu H.C."/>
            <person name="Kim C.J."/>
            <person name="Nguyen M."/>
            <person name="Pham P.K."/>
            <person name="Cheuk R.F."/>
            <person name="Karlin-Newmann G."/>
            <person name="Liu S.X."/>
            <person name="Lam B."/>
            <person name="Sakano H."/>
            <person name="Wu T."/>
            <person name="Yu G."/>
            <person name="Miranda M."/>
            <person name="Quach H.L."/>
            <person name="Tripp M."/>
            <person name="Chang C.H."/>
            <person name="Lee J.M."/>
            <person name="Toriumi M.J."/>
            <person name="Chan M.M."/>
            <person name="Tang C.C."/>
            <person name="Onodera C.S."/>
            <person name="Deng J.M."/>
            <person name="Akiyama K."/>
            <person name="Ansari Y."/>
            <person name="Arakawa T."/>
            <person name="Banh J."/>
            <person name="Banno F."/>
            <person name="Bowser L."/>
            <person name="Brooks S.Y."/>
            <person name="Carninci P."/>
            <person name="Chao Q."/>
            <person name="Choy N."/>
            <person name="Enju A."/>
            <person name="Goldsmith A.D."/>
            <person name="Gurjal M."/>
            <person name="Hansen N.F."/>
            <person name="Hayashizaki Y."/>
            <person name="Johnson-Hopson C."/>
            <person name="Hsuan V.W."/>
            <person name="Iida K."/>
            <person name="Karnes M."/>
            <person name="Khan S."/>
            <person name="Koesema E."/>
            <person name="Ishida J."/>
            <person name="Jiang P.X."/>
            <person name="Jones T."/>
            <person name="Kawai J."/>
            <person name="Kamiya A."/>
            <person name="Meyers C."/>
            <person name="Nakajima M."/>
            <person name="Narusaka M."/>
            <person name="Seki M."/>
            <person name="Sakurai T."/>
            <person name="Satou M."/>
            <person name="Tamse R."/>
            <person name="Vaysberg M."/>
            <person name="Wallender E.K."/>
            <person name="Wong C."/>
            <person name="Yamamura Y."/>
            <person name="Yuan S."/>
            <person name="Shinozaki K."/>
            <person name="Davis R.W."/>
            <person name="Theologis A."/>
            <person name="Ecker J.R."/>
        </authorList>
    </citation>
    <scope>NUCLEOTIDE SEQUENCE [LARGE SCALE MRNA]</scope>
    <source>
        <strain>cv. Columbia</strain>
    </source>
</reference>
<reference key="4">
    <citation type="journal article" date="2010" name="Biosci. Biotechnol. Biochem.">
        <title>The contribution of Arabidopsis homologs of L-gulono-1,4-lactone oxidase to the biosynthesis of ascorbic acid.</title>
        <authorList>
            <person name="Maruta T."/>
            <person name="Ichikawa Y."/>
            <person name="Mieda T."/>
            <person name="Takeda T."/>
            <person name="Tamoi M."/>
            <person name="Yabuta Y."/>
            <person name="Ishikawa T."/>
            <person name="Shigeoka S."/>
        </authorList>
    </citation>
    <scope>FUNCTION</scope>
</reference>
<evidence type="ECO:0000250" key="1">
    <source>
        <dbReference type="UniProtKB" id="P58710"/>
    </source>
</evidence>
<evidence type="ECO:0000255" key="2"/>
<evidence type="ECO:0000255" key="3">
    <source>
        <dbReference type="PROSITE-ProRule" id="PRU00718"/>
    </source>
</evidence>
<evidence type="ECO:0000303" key="4">
    <source>
    </source>
</evidence>
<evidence type="ECO:0000305" key="5"/>
<evidence type="ECO:0000305" key="6">
    <source>
    </source>
</evidence>
<evidence type="ECO:0000312" key="7">
    <source>
        <dbReference type="Araport" id="AT5G56490"/>
    </source>
</evidence>
<evidence type="ECO:0000312" key="8">
    <source>
        <dbReference type="EMBL" id="BAB11277.1"/>
    </source>
</evidence>
<evidence type="ECO:0000312" key="9">
    <source>
        <dbReference type="Proteomes" id="UP000006548"/>
    </source>
</evidence>
<protein>
    <recommendedName>
        <fullName evidence="4">Probable L-gulonolactone oxidase 4</fullName>
        <shortName evidence="4">AtGulLO4</shortName>
        <ecNumber evidence="5">1.1.3.8</ecNumber>
    </recommendedName>
</protein>